<feature type="chain" id="PRO_1000013033" description="UPF0145 protein CYB_1351">
    <location>
        <begin position="1"/>
        <end position="103"/>
    </location>
</feature>
<dbReference type="EMBL" id="CP000240">
    <property type="protein sequence ID" value="ABD02324.1"/>
    <property type="molecule type" value="Genomic_DNA"/>
</dbReference>
<dbReference type="RefSeq" id="WP_011432974.1">
    <property type="nucleotide sequence ID" value="NC_007776.1"/>
</dbReference>
<dbReference type="SMR" id="Q2JLT0"/>
<dbReference type="KEGG" id="cyb:CYB_1351"/>
<dbReference type="eggNOG" id="COG0393">
    <property type="taxonomic scope" value="Bacteria"/>
</dbReference>
<dbReference type="HOGENOM" id="CLU_117144_3_2_3"/>
<dbReference type="OrthoDB" id="9796448at2"/>
<dbReference type="Proteomes" id="UP000001938">
    <property type="component" value="Chromosome"/>
</dbReference>
<dbReference type="Gene3D" id="3.30.110.70">
    <property type="entry name" value="Hypothetical protein apc22750. Chain B"/>
    <property type="match status" value="1"/>
</dbReference>
<dbReference type="HAMAP" id="MF_00338">
    <property type="entry name" value="UPF0145"/>
    <property type="match status" value="1"/>
</dbReference>
<dbReference type="InterPro" id="IPR035439">
    <property type="entry name" value="UPF0145_dom_sf"/>
</dbReference>
<dbReference type="InterPro" id="IPR002765">
    <property type="entry name" value="UPF0145_YbjQ-like"/>
</dbReference>
<dbReference type="PANTHER" id="PTHR34068">
    <property type="entry name" value="UPF0145 PROTEIN YBJQ"/>
    <property type="match status" value="1"/>
</dbReference>
<dbReference type="PANTHER" id="PTHR34068:SF1">
    <property type="entry name" value="UPF0145 PROTEIN YBJQ"/>
    <property type="match status" value="1"/>
</dbReference>
<dbReference type="Pfam" id="PF01906">
    <property type="entry name" value="YbjQ_1"/>
    <property type="match status" value="1"/>
</dbReference>
<dbReference type="SUPFAM" id="SSF117782">
    <property type="entry name" value="YbjQ-like"/>
    <property type="match status" value="1"/>
</dbReference>
<name>Y1351_SYNJB</name>
<sequence>MLLTTTDVLQGREVERYLGIVTAEVVYGTNVLRDFLATLRNIIGGRTRTYEEVFENAQKKVLEELEQRAKRLGANGILGVSIHTNMSTTMILVTAAGTAVKLR</sequence>
<comment type="similarity">
    <text evidence="1">Belongs to the UPF0145 family.</text>
</comment>
<evidence type="ECO:0000255" key="1">
    <source>
        <dbReference type="HAMAP-Rule" id="MF_00338"/>
    </source>
</evidence>
<protein>
    <recommendedName>
        <fullName evidence="1">UPF0145 protein CYB_1351</fullName>
    </recommendedName>
</protein>
<keyword id="KW-1185">Reference proteome</keyword>
<proteinExistence type="inferred from homology"/>
<gene>
    <name type="ordered locus">CYB_1351</name>
</gene>
<organism>
    <name type="scientific">Synechococcus sp. (strain JA-2-3B'a(2-13))</name>
    <name type="common">Cyanobacteria bacterium Yellowstone B-Prime</name>
    <dbReference type="NCBI Taxonomy" id="321332"/>
    <lineage>
        <taxon>Bacteria</taxon>
        <taxon>Bacillati</taxon>
        <taxon>Cyanobacteriota</taxon>
        <taxon>Cyanophyceae</taxon>
        <taxon>Synechococcales</taxon>
        <taxon>Synechococcaceae</taxon>
        <taxon>Synechococcus</taxon>
    </lineage>
</organism>
<reference key="1">
    <citation type="journal article" date="2007" name="ISME J.">
        <title>Population level functional diversity in a microbial community revealed by comparative genomic and metagenomic analyses.</title>
        <authorList>
            <person name="Bhaya D."/>
            <person name="Grossman A.R."/>
            <person name="Steunou A.-S."/>
            <person name="Khuri N."/>
            <person name="Cohan F.M."/>
            <person name="Hamamura N."/>
            <person name="Melendrez M.C."/>
            <person name="Bateson M.M."/>
            <person name="Ward D.M."/>
            <person name="Heidelberg J.F."/>
        </authorList>
    </citation>
    <scope>NUCLEOTIDE SEQUENCE [LARGE SCALE GENOMIC DNA]</scope>
    <source>
        <strain>JA-2-3B'a(2-13)</strain>
    </source>
</reference>
<accession>Q2JLT0</accession>